<accession>B5FNT7</accession>
<feature type="chain" id="PRO_0000380536" description="UDP-4-amino-4-deoxy-L-arabinose--oxoglutarate aminotransferase">
    <location>
        <begin position="1"/>
        <end position="379"/>
    </location>
</feature>
<feature type="modified residue" description="N6-(pyridoxal phosphate)lysine" evidence="1">
    <location>
        <position position="182"/>
    </location>
</feature>
<organism>
    <name type="scientific">Salmonella dublin (strain CT_02021853)</name>
    <dbReference type="NCBI Taxonomy" id="439851"/>
    <lineage>
        <taxon>Bacteria</taxon>
        <taxon>Pseudomonadati</taxon>
        <taxon>Pseudomonadota</taxon>
        <taxon>Gammaproteobacteria</taxon>
        <taxon>Enterobacterales</taxon>
        <taxon>Enterobacteriaceae</taxon>
        <taxon>Salmonella</taxon>
    </lineage>
</organism>
<gene>
    <name evidence="1" type="primary">arnB</name>
    <name type="ordered locus">SeD_A2641</name>
</gene>
<dbReference type="EC" id="2.6.1.87" evidence="1"/>
<dbReference type="EMBL" id="CP001144">
    <property type="protein sequence ID" value="ACH74439.1"/>
    <property type="status" value="ALT_INIT"/>
    <property type="molecule type" value="Genomic_DNA"/>
</dbReference>
<dbReference type="SMR" id="B5FNT7"/>
<dbReference type="KEGG" id="sed:SeD_A2641"/>
<dbReference type="HOGENOM" id="CLU_033332_0_3_6"/>
<dbReference type="UniPathway" id="UPA00030"/>
<dbReference type="UniPathway" id="UPA00032">
    <property type="reaction ID" value="UER00493"/>
</dbReference>
<dbReference type="Proteomes" id="UP000008322">
    <property type="component" value="Chromosome"/>
</dbReference>
<dbReference type="GO" id="GO:0016020">
    <property type="term" value="C:membrane"/>
    <property type="evidence" value="ECO:0007669"/>
    <property type="project" value="GOC"/>
</dbReference>
<dbReference type="GO" id="GO:0030170">
    <property type="term" value="F:pyridoxal phosphate binding"/>
    <property type="evidence" value="ECO:0007669"/>
    <property type="project" value="TreeGrafter"/>
</dbReference>
<dbReference type="GO" id="GO:0099620">
    <property type="term" value="F:UDP-4-amino-4-deoxy-L-arabinose aminotransferase"/>
    <property type="evidence" value="ECO:0007669"/>
    <property type="project" value="UniProtKB-EC"/>
</dbReference>
<dbReference type="GO" id="GO:0009245">
    <property type="term" value="P:lipid A biosynthetic process"/>
    <property type="evidence" value="ECO:0007669"/>
    <property type="project" value="UniProtKB-KW"/>
</dbReference>
<dbReference type="GO" id="GO:0009103">
    <property type="term" value="P:lipopolysaccharide biosynthetic process"/>
    <property type="evidence" value="ECO:0007669"/>
    <property type="project" value="UniProtKB-UniRule"/>
</dbReference>
<dbReference type="GO" id="GO:0046677">
    <property type="term" value="P:response to antibiotic"/>
    <property type="evidence" value="ECO:0007669"/>
    <property type="project" value="UniProtKB-KW"/>
</dbReference>
<dbReference type="CDD" id="cd00616">
    <property type="entry name" value="AHBA_syn"/>
    <property type="match status" value="1"/>
</dbReference>
<dbReference type="FunFam" id="3.40.640.10:FF:000040">
    <property type="entry name" value="UDP-4-amino-4-deoxy-L-arabinose--oxoglutarate aminotransferase"/>
    <property type="match status" value="1"/>
</dbReference>
<dbReference type="FunFam" id="3.90.1150.10:FF:000030">
    <property type="entry name" value="UDP-4-amino-4-deoxy-L-arabinose--oxoglutarate aminotransferase"/>
    <property type="match status" value="1"/>
</dbReference>
<dbReference type="Gene3D" id="3.90.1150.10">
    <property type="entry name" value="Aspartate Aminotransferase, domain 1"/>
    <property type="match status" value="1"/>
</dbReference>
<dbReference type="Gene3D" id="3.40.640.10">
    <property type="entry name" value="Type I PLP-dependent aspartate aminotransferase-like (Major domain)"/>
    <property type="match status" value="1"/>
</dbReference>
<dbReference type="HAMAP" id="MF_01167">
    <property type="entry name" value="ArnB_transfer"/>
    <property type="match status" value="1"/>
</dbReference>
<dbReference type="InterPro" id="IPR022850">
    <property type="entry name" value="ArnB_NH2Trfase"/>
</dbReference>
<dbReference type="InterPro" id="IPR000653">
    <property type="entry name" value="DegT/StrS_aminotransferase"/>
</dbReference>
<dbReference type="InterPro" id="IPR015424">
    <property type="entry name" value="PyrdxlP-dep_Trfase"/>
</dbReference>
<dbReference type="InterPro" id="IPR015421">
    <property type="entry name" value="PyrdxlP-dep_Trfase_major"/>
</dbReference>
<dbReference type="InterPro" id="IPR015422">
    <property type="entry name" value="PyrdxlP-dep_Trfase_small"/>
</dbReference>
<dbReference type="NCBIfam" id="NF008658">
    <property type="entry name" value="PRK11658.1"/>
    <property type="match status" value="1"/>
</dbReference>
<dbReference type="PANTHER" id="PTHR30244">
    <property type="entry name" value="TRANSAMINASE"/>
    <property type="match status" value="1"/>
</dbReference>
<dbReference type="PANTHER" id="PTHR30244:SF41">
    <property type="entry name" value="UDP-4-AMINO-4-DEOXY-L-ARABINOSE--OXOGLUTARATE AMINOTRANSFERASE"/>
    <property type="match status" value="1"/>
</dbReference>
<dbReference type="Pfam" id="PF01041">
    <property type="entry name" value="DegT_DnrJ_EryC1"/>
    <property type="match status" value="1"/>
</dbReference>
<dbReference type="PIRSF" id="PIRSF000390">
    <property type="entry name" value="PLP_StrS"/>
    <property type="match status" value="1"/>
</dbReference>
<dbReference type="SUPFAM" id="SSF53383">
    <property type="entry name" value="PLP-dependent transferases"/>
    <property type="match status" value="1"/>
</dbReference>
<comment type="function">
    <text evidence="1">Catalyzes the conversion of UDP-4-keto-arabinose (UDP-Ara4O) to UDP-4-amino-4-deoxy-L-arabinose (UDP-L-Ara4N). The modified arabinose is attached to lipid A and is required for resistance to polymyxin and cationic antimicrobial peptides.</text>
</comment>
<comment type="catalytic activity">
    <reaction evidence="1">
        <text>UDP-4-amino-4-deoxy-beta-L-arabinose + 2-oxoglutarate = UDP-beta-L-threo-pentopyranos-4-ulose + L-glutamate</text>
        <dbReference type="Rhea" id="RHEA:24710"/>
        <dbReference type="ChEBI" id="CHEBI:16810"/>
        <dbReference type="ChEBI" id="CHEBI:29985"/>
        <dbReference type="ChEBI" id="CHEBI:58708"/>
        <dbReference type="ChEBI" id="CHEBI:58710"/>
        <dbReference type="EC" id="2.6.1.87"/>
    </reaction>
</comment>
<comment type="cofactor">
    <cofactor evidence="1">
        <name>pyridoxal 5'-phosphate</name>
        <dbReference type="ChEBI" id="CHEBI:597326"/>
    </cofactor>
</comment>
<comment type="pathway">
    <text evidence="1">Nucleotide-sugar biosynthesis; UDP-4-deoxy-4-formamido-beta-L-arabinose biosynthesis; UDP-4-deoxy-4-formamido-beta-L-arabinose from UDP-alpha-D-glucuronate: step 2/3.</text>
</comment>
<comment type="pathway">
    <text evidence="1">Bacterial outer membrane biogenesis; lipopolysaccharide biosynthesis.</text>
</comment>
<comment type="subunit">
    <text evidence="1">Homodimer.</text>
</comment>
<comment type="similarity">
    <text evidence="1">Belongs to the DegT/DnrJ/EryC1 family. ArnB subfamily.</text>
</comment>
<comment type="sequence caution" evidence="2">
    <conflict type="erroneous initiation">
        <sequence resource="EMBL-CDS" id="ACH74439"/>
    </conflict>
</comment>
<sequence>MSDFLPFSRPAMGAEELAAVKTVLDSGWITTGPKNQELEAAFCRLTGNQYAVAVSSATAGMHIALMALGIGEGDEVITPSMTWVSTLNMIVLLGATPVMVDVDRDTLMVTPEHIEAAITPQTKAIIPVHYAGAPADLDAIYALGERYGIPVIEDAAHATGTSYKGRHIGARGTAIFSFHAIKNITCAEGGIVVTDNPQFADKLRSLKFHGLGVDAWDRQCGGRAPQAEVLAPGYKYNLPDLNAAIALAQLQKLDALNARRAAIAAQYHQAMADLPFQPLSLPSWEHIHAWHLFIIRVDEARCGITRDALMASLKTKGIGTGLHFRAAHTQKYYRERFPTLTLPDTEWNSERICSLPLFPDMTESDFDRVITALHQIAGQ</sequence>
<name>ARNB_SALDC</name>
<protein>
    <recommendedName>
        <fullName evidence="1">UDP-4-amino-4-deoxy-L-arabinose--oxoglutarate aminotransferase</fullName>
        <ecNumber evidence="1">2.6.1.87</ecNumber>
    </recommendedName>
    <alternativeName>
        <fullName evidence="1">UDP-(beta-L-threo-pentapyranosyl-4''-ulose diphosphate) aminotransferase</fullName>
        <shortName evidence="1">UDP-Ara4O aminotransferase</shortName>
    </alternativeName>
    <alternativeName>
        <fullName evidence="1">UDP-4-amino-4-deoxy-L-arabinose aminotransferase</fullName>
    </alternativeName>
</protein>
<reference key="1">
    <citation type="journal article" date="2011" name="J. Bacteriol.">
        <title>Comparative genomics of 28 Salmonella enterica isolates: evidence for CRISPR-mediated adaptive sublineage evolution.</title>
        <authorList>
            <person name="Fricke W.F."/>
            <person name="Mammel M.K."/>
            <person name="McDermott P.F."/>
            <person name="Tartera C."/>
            <person name="White D.G."/>
            <person name="Leclerc J.E."/>
            <person name="Ravel J."/>
            <person name="Cebula T.A."/>
        </authorList>
    </citation>
    <scope>NUCLEOTIDE SEQUENCE [LARGE SCALE GENOMIC DNA]</scope>
    <source>
        <strain>CT_02021853</strain>
    </source>
</reference>
<evidence type="ECO:0000255" key="1">
    <source>
        <dbReference type="HAMAP-Rule" id="MF_01167"/>
    </source>
</evidence>
<evidence type="ECO:0000305" key="2"/>
<proteinExistence type="inferred from homology"/>
<keyword id="KW-0032">Aminotransferase</keyword>
<keyword id="KW-0046">Antibiotic resistance</keyword>
<keyword id="KW-0441">Lipid A biosynthesis</keyword>
<keyword id="KW-0444">Lipid biosynthesis</keyword>
<keyword id="KW-0443">Lipid metabolism</keyword>
<keyword id="KW-0448">Lipopolysaccharide biosynthesis</keyword>
<keyword id="KW-0663">Pyridoxal phosphate</keyword>
<keyword id="KW-0808">Transferase</keyword>